<evidence type="ECO:0000250" key="1">
    <source>
        <dbReference type="UniProtKB" id="P00175"/>
    </source>
</evidence>
<evidence type="ECO:0000255" key="2">
    <source>
        <dbReference type="PROSITE-ProRule" id="PRU00279"/>
    </source>
</evidence>
<evidence type="ECO:0000255" key="3">
    <source>
        <dbReference type="PROSITE-ProRule" id="PRU00683"/>
    </source>
</evidence>
<evidence type="ECO:0000303" key="4">
    <source>
    </source>
</evidence>
<evidence type="ECO:0000303" key="5">
    <source>
    </source>
</evidence>
<evidence type="ECO:0000303" key="6">
    <source>
    </source>
</evidence>
<evidence type="ECO:0000305" key="7"/>
<organism>
    <name type="scientific">Wickerhamomyces anomalus</name>
    <name type="common">Yeast</name>
    <name type="synonym">Hansenula anomala</name>
    <dbReference type="NCBI Taxonomy" id="4927"/>
    <lineage>
        <taxon>Eukaryota</taxon>
        <taxon>Fungi</taxon>
        <taxon>Dikarya</taxon>
        <taxon>Ascomycota</taxon>
        <taxon>Saccharomycotina</taxon>
        <taxon>Saccharomycetes</taxon>
        <taxon>Phaffomycetales</taxon>
        <taxon>Wickerhamomycetaceae</taxon>
        <taxon>Wickerhamomyces</taxon>
    </lineage>
</organism>
<protein>
    <recommendedName>
        <fullName>L-lactate dehydrogenase (cytochrome)</fullName>
        <ecNumber evidence="1">1.1.2.3</ecNumber>
    </recommendedName>
    <alternativeName>
        <fullName>Cytochrome b2</fullName>
    </alternativeName>
    <alternativeName>
        <fullName evidence="4 5 6">Flavocytochrome b2</fullName>
        <shortName>FCB2</shortName>
    </alternativeName>
    <alternativeName>
        <fullName>L-lactate ferricytochrome c oxidoreductase</fullName>
        <shortName>L-LCR</shortName>
    </alternativeName>
</protein>
<proteinExistence type="evidence at protein level"/>
<feature type="transit peptide" description="Mitochondrion">
    <location>
        <begin position="1"/>
        <end position="73"/>
    </location>
</feature>
<feature type="chain" id="PRO_0000006479" description="L-lactate dehydrogenase (cytochrome)">
    <location>
        <begin position="74"/>
        <end position="573"/>
    </location>
</feature>
<feature type="domain" description="Cytochrome b5 heme-binding" evidence="2">
    <location>
        <begin position="80"/>
        <end position="157"/>
    </location>
</feature>
<feature type="domain" description="FMN hydroxy acid dehydrogenase" evidence="3">
    <location>
        <begin position="182"/>
        <end position="542"/>
    </location>
</feature>
<feature type="binding site" description="axial binding residue" evidence="1">
    <location>
        <position position="115"/>
    </location>
    <ligand>
        <name>heme b</name>
        <dbReference type="ChEBI" id="CHEBI:60344"/>
    </ligand>
    <ligandPart>
        <name>Fe</name>
        <dbReference type="ChEBI" id="CHEBI:18248"/>
    </ligandPart>
</feature>
<feature type="binding site" description="axial binding residue" evidence="1">
    <location>
        <position position="138"/>
    </location>
    <ligand>
        <name>heme b</name>
        <dbReference type="ChEBI" id="CHEBI:60344"/>
    </ligand>
    <ligandPart>
        <name>Fe</name>
        <dbReference type="ChEBI" id="CHEBI:18248"/>
    </ligandPart>
</feature>
<feature type="binding site" evidence="1">
    <location>
        <position position="208"/>
    </location>
    <ligand>
        <name>heme b</name>
        <dbReference type="ChEBI" id="CHEBI:60344"/>
    </ligand>
</feature>
<feature type="binding site" evidence="1">
    <location>
        <position position="208"/>
    </location>
    <ligand>
        <name>pyruvate</name>
        <dbReference type="ChEBI" id="CHEBI:15361"/>
    </ligand>
</feature>
<feature type="binding site" evidence="1">
    <location>
        <begin position="260"/>
        <end position="263"/>
    </location>
    <ligand>
        <name>FMN</name>
        <dbReference type="ChEBI" id="CHEBI:58210"/>
    </ligand>
</feature>
<feature type="binding site" evidence="1">
    <location>
        <position position="290"/>
    </location>
    <ligand>
        <name>FMN</name>
        <dbReference type="ChEBI" id="CHEBI:58210"/>
    </ligand>
</feature>
<feature type="binding site" evidence="1">
    <location>
        <position position="313"/>
    </location>
    <ligand>
        <name>FMN</name>
        <dbReference type="ChEBI" id="CHEBI:58210"/>
    </ligand>
</feature>
<feature type="binding site" evidence="1">
    <location>
        <position position="315"/>
    </location>
    <ligand>
        <name>pyruvate</name>
        <dbReference type="ChEBI" id="CHEBI:15361"/>
    </ligand>
</feature>
<feature type="binding site" evidence="1">
    <location>
        <position position="341"/>
    </location>
    <ligand>
        <name>FMN</name>
        <dbReference type="ChEBI" id="CHEBI:58210"/>
    </ligand>
</feature>
<feature type="binding site" evidence="1">
    <location>
        <position position="357"/>
    </location>
    <ligand>
        <name>heme b</name>
        <dbReference type="ChEBI" id="CHEBI:60344"/>
    </ligand>
</feature>
<feature type="binding site" evidence="1">
    <location>
        <position position="408"/>
    </location>
    <ligand>
        <name>FMN</name>
        <dbReference type="ChEBI" id="CHEBI:58210"/>
    </ligand>
</feature>
<feature type="binding site" evidence="1">
    <location>
        <position position="432"/>
    </location>
    <ligand>
        <name>pyruvate</name>
        <dbReference type="ChEBI" id="CHEBI:15361"/>
    </ligand>
</feature>
<feature type="binding site" evidence="1">
    <location>
        <position position="435"/>
    </location>
    <ligand>
        <name>pyruvate</name>
        <dbReference type="ChEBI" id="CHEBI:15361"/>
    </ligand>
</feature>
<feature type="binding site" evidence="1">
    <location>
        <begin position="468"/>
        <end position="472"/>
    </location>
    <ligand>
        <name>FMN</name>
        <dbReference type="ChEBI" id="CHEBI:58210"/>
    </ligand>
</feature>
<feature type="binding site" evidence="1">
    <location>
        <begin position="491"/>
        <end position="492"/>
    </location>
    <ligand>
        <name>FMN</name>
        <dbReference type="ChEBI" id="CHEBI:58210"/>
    </ligand>
</feature>
<keyword id="KW-0903">Direct protein sequencing</keyword>
<keyword id="KW-0249">Electron transport</keyword>
<keyword id="KW-0285">Flavoprotein</keyword>
<keyword id="KW-0288">FMN</keyword>
<keyword id="KW-0349">Heme</keyword>
<keyword id="KW-0408">Iron</keyword>
<keyword id="KW-0479">Metal-binding</keyword>
<keyword id="KW-0496">Mitochondrion</keyword>
<keyword id="KW-0560">Oxidoreductase</keyword>
<keyword id="KW-0679">Respiratory chain</keyword>
<keyword id="KW-0809">Transit peptide</keyword>
<keyword id="KW-0813">Transport</keyword>
<dbReference type="EC" id="1.1.2.3" evidence="1"/>
<dbReference type="EMBL" id="X16051">
    <property type="protein sequence ID" value="CAA34183.1"/>
    <property type="molecule type" value="Genomic_DNA"/>
</dbReference>
<dbReference type="PIR" id="S06600">
    <property type="entry name" value="S06600"/>
</dbReference>
<dbReference type="SMR" id="P09437"/>
<dbReference type="GO" id="GO:0005758">
    <property type="term" value="C:mitochondrial intermembrane space"/>
    <property type="evidence" value="ECO:0007669"/>
    <property type="project" value="UniProtKB-SubCell"/>
</dbReference>
<dbReference type="GO" id="GO:0020037">
    <property type="term" value="F:heme binding"/>
    <property type="evidence" value="ECO:0007669"/>
    <property type="project" value="InterPro"/>
</dbReference>
<dbReference type="GO" id="GO:0004460">
    <property type="term" value="F:L-lactate dehydrogenase (cytochrome) activity"/>
    <property type="evidence" value="ECO:0007669"/>
    <property type="project" value="UniProtKB-EC"/>
</dbReference>
<dbReference type="GO" id="GO:0046872">
    <property type="term" value="F:metal ion binding"/>
    <property type="evidence" value="ECO:0007669"/>
    <property type="project" value="UniProtKB-KW"/>
</dbReference>
<dbReference type="GO" id="GO:0006089">
    <property type="term" value="P:lactate metabolic process"/>
    <property type="evidence" value="ECO:0007669"/>
    <property type="project" value="TreeGrafter"/>
</dbReference>
<dbReference type="CDD" id="cd02922">
    <property type="entry name" value="FCB2_FMN"/>
    <property type="match status" value="1"/>
</dbReference>
<dbReference type="FunFam" id="3.10.120.10:FF:000009">
    <property type="entry name" value="Cytochrome b2, mitochondrial, putative"/>
    <property type="match status" value="1"/>
</dbReference>
<dbReference type="FunFam" id="3.20.20.70:FF:000062">
    <property type="entry name" value="Cytochrome b2, mitochondrial, putative"/>
    <property type="match status" value="1"/>
</dbReference>
<dbReference type="Gene3D" id="3.20.20.70">
    <property type="entry name" value="Aldolase class I"/>
    <property type="match status" value="1"/>
</dbReference>
<dbReference type="Gene3D" id="3.10.120.10">
    <property type="entry name" value="Cytochrome b5-like heme/steroid binding domain"/>
    <property type="match status" value="1"/>
</dbReference>
<dbReference type="InterPro" id="IPR013785">
    <property type="entry name" value="Aldolase_TIM"/>
</dbReference>
<dbReference type="InterPro" id="IPR001199">
    <property type="entry name" value="Cyt_B5-like_heme/steroid-bd"/>
</dbReference>
<dbReference type="InterPro" id="IPR036400">
    <property type="entry name" value="Cyt_B5-like_heme/steroid_sf"/>
</dbReference>
<dbReference type="InterPro" id="IPR018506">
    <property type="entry name" value="Cyt_B5_heme-BS"/>
</dbReference>
<dbReference type="InterPro" id="IPR000262">
    <property type="entry name" value="FMN-dep_DH"/>
</dbReference>
<dbReference type="InterPro" id="IPR037396">
    <property type="entry name" value="FMN_HAD"/>
</dbReference>
<dbReference type="InterPro" id="IPR008259">
    <property type="entry name" value="FMN_hydac_DH_AS"/>
</dbReference>
<dbReference type="InterPro" id="IPR037458">
    <property type="entry name" value="L-MDH/L-LDH_FMN-bd"/>
</dbReference>
<dbReference type="PANTHER" id="PTHR10578:SF148">
    <property type="entry name" value="L-LACTATE DEHYDROGENASE (CYTOCHROME)"/>
    <property type="match status" value="1"/>
</dbReference>
<dbReference type="PANTHER" id="PTHR10578">
    <property type="entry name" value="S -2-HYDROXY-ACID OXIDASE-RELATED"/>
    <property type="match status" value="1"/>
</dbReference>
<dbReference type="Pfam" id="PF00173">
    <property type="entry name" value="Cyt-b5"/>
    <property type="match status" value="1"/>
</dbReference>
<dbReference type="Pfam" id="PF01070">
    <property type="entry name" value="FMN_dh"/>
    <property type="match status" value="1"/>
</dbReference>
<dbReference type="SMART" id="SM01117">
    <property type="entry name" value="Cyt-b5"/>
    <property type="match status" value="1"/>
</dbReference>
<dbReference type="SUPFAM" id="SSF55856">
    <property type="entry name" value="Cytochrome b5-like heme/steroid binding domain"/>
    <property type="match status" value="1"/>
</dbReference>
<dbReference type="SUPFAM" id="SSF51395">
    <property type="entry name" value="FMN-linked oxidoreductases"/>
    <property type="match status" value="1"/>
</dbReference>
<dbReference type="PROSITE" id="PS00191">
    <property type="entry name" value="CYTOCHROME_B5_1"/>
    <property type="match status" value="1"/>
</dbReference>
<dbReference type="PROSITE" id="PS50255">
    <property type="entry name" value="CYTOCHROME_B5_2"/>
    <property type="match status" value="1"/>
</dbReference>
<dbReference type="PROSITE" id="PS00557">
    <property type="entry name" value="FMN_HYDROXY_ACID_DH_1"/>
    <property type="match status" value="1"/>
</dbReference>
<dbReference type="PROSITE" id="PS51349">
    <property type="entry name" value="FMN_HYDROXY_ACID_DH_2"/>
    <property type="match status" value="1"/>
</dbReference>
<accession>P09437</accession>
<reference key="1">
    <citation type="journal article" date="1989" name="Nucleic Acids Res.">
        <title>Nucleotide sequence of the Hansenula anomala gene encoding flavocytochrome b2 (L-lactate:cytochrome c oxidoreductase).</title>
        <authorList>
            <person name="Risler Y."/>
            <person name="Tegoni M."/>
            <person name="Gervais M."/>
        </authorList>
    </citation>
    <scope>NUCLEOTIDE SEQUENCE [GENOMIC DNA]</scope>
</reference>
<reference key="2">
    <citation type="journal article" date="1989" name="Biochem. J.">
        <title>Structural basis for the kinetic differences between flavocytochromes b2 from the yeasts Hansenula anomala and Saccharomyces cerevisiae.</title>
        <authorList>
            <person name="Black M.T."/>
            <person name="Gunn F.J."/>
            <person name="Chapman S.K."/>
            <person name="Reid G.A."/>
        </authorList>
    </citation>
    <scope>NUCLEOTIDE SEQUENCE [GENOMIC DNA]</scope>
</reference>
<reference key="3">
    <citation type="journal article" date="1987" name="Eur. J. Biochem.">
        <title>Amino-acid sequence of the cytochrome-b5-like heme-binding domain from Hansenula anomala flavocytochrome b2.</title>
        <authorList>
            <person name="Haumont P.-Y."/>
            <person name="Thomas M.-A."/>
            <person name="Labeyrie F."/>
            <person name="Lederer F."/>
        </authorList>
    </citation>
    <scope>PROTEIN SEQUENCE OF 80-163</scope>
</reference>
<sequence length="573" mass="64202">MFKSQLRTATARSSFRSLASKLNPQRFNSSKTPLLNATRGSNRSKNSLIALAISLSAVSSSYYLYQKDKFISADVPHWKDIELTPEIVSQHNKKDDLWVVLNGQVYDLTDFLPNHPGGQKIIIRYAGKDATKIFVPIHPPDTIEKFIPPEKHLGPLVGEFEQEEEELSDEEIDRLERIERKPPLSQMINLHDFETIARQILPPPALAYYCSAADDEVTLRENHNAYHRIFFNPKILIDVKDVDISTEFFGEKTSAPFYISATALAKLGHPEGEVAIAKGAGREDVVQMISTLASCSFDEIADARIPGQQQWYQLYVNADRSITEKAVRHAEERGMKGLFITVDAPSLGRREKDMKMKFEADSDVQGDDEDIDRSQGASRALSSFIDPSLSWKDIAFIKSITKMPIVIKGVQRKEDVLLAAEHGLQGVVLSNHGGRQLDYTRAPVEVLAEVMPILKERGLDQKIDIFVDGGVRRGTDVLKALCLGAKGVGLGRPFLYAMSSYGDKGVTKAIQLLKDEIEMNMRLLGVNKIEELTPELLDTRSIHNRAVPVAKDYLYEQNYQRMSGAEFRPGIED</sequence>
<gene>
    <name type="primary">CYB2</name>
</gene>
<comment type="function">
    <text evidence="1">Catalyzes the oxidation of (S)-lactate (L-lactate) to pyruvate with subsequent transfer of electrons to cytochrome c. Is involved in the utilization of (S)-lactate as a sole source of carbon for growth.</text>
</comment>
<comment type="catalytic activity">
    <reaction evidence="1">
        <text>(S)-lactate + 2 Fe(III)-[cytochrome c] = 2 Fe(II)-[cytochrome c] + pyruvate + 2 H(+)</text>
        <dbReference type="Rhea" id="RHEA:19909"/>
        <dbReference type="Rhea" id="RHEA-COMP:10350"/>
        <dbReference type="Rhea" id="RHEA-COMP:14399"/>
        <dbReference type="ChEBI" id="CHEBI:15361"/>
        <dbReference type="ChEBI" id="CHEBI:15378"/>
        <dbReference type="ChEBI" id="CHEBI:16651"/>
        <dbReference type="ChEBI" id="CHEBI:29033"/>
        <dbReference type="ChEBI" id="CHEBI:29034"/>
        <dbReference type="EC" id="1.1.2.3"/>
    </reaction>
    <physiologicalReaction direction="left-to-right" evidence="1">
        <dbReference type="Rhea" id="RHEA:19910"/>
    </physiologicalReaction>
</comment>
<comment type="cofactor">
    <cofactor evidence="1">
        <name>FMN</name>
        <dbReference type="ChEBI" id="CHEBI:58210"/>
    </cofactor>
</comment>
<comment type="cofactor">
    <cofactor evidence="1">
        <name>heme b</name>
        <dbReference type="ChEBI" id="CHEBI:60344"/>
    </cofactor>
    <text evidence="1">Binds 1 heme b (iron(II)-protoporphyrin IX) group non-covalently per subunit.</text>
</comment>
<comment type="subunit">
    <text evidence="1">Homotetramer.</text>
</comment>
<comment type="subcellular location">
    <subcellularLocation>
        <location evidence="1">Mitochondrion intermembrane space</location>
    </subcellularLocation>
</comment>
<comment type="domain">
    <text evidence="1">Consists of two discrete domains, an N-terminal cytochrome b domain and a C-terminal flavin-binding domain. In addition there is an extended C-terminal tail. The cytochrome b domain is required for efficient cytochrome c reduction.</text>
</comment>
<comment type="similarity">
    <text evidence="7">In the N-terminal section; belongs to the cytochrome b5 family.</text>
</comment>
<comment type="similarity">
    <text evidence="7">In the C-terminal section; belongs to the FMN-dependent alpha-hydroxy acid dehydrogenase family.</text>
</comment>
<name>CYB2_WICAO</name>